<sequence length="42" mass="4817">YLDHGLGAPAPYVDPLEPKREVDELADQMGFQEAYRRFYGTT</sequence>
<dbReference type="SMR" id="P86312"/>
<dbReference type="GO" id="GO:0005737">
    <property type="term" value="C:cytoplasm"/>
    <property type="evidence" value="ECO:0000250"/>
    <property type="project" value="UniProtKB"/>
</dbReference>
<dbReference type="GO" id="GO:0005576">
    <property type="term" value="C:extracellular region"/>
    <property type="evidence" value="ECO:0007669"/>
    <property type="project" value="UniProtKB-SubCell"/>
</dbReference>
<dbReference type="GO" id="GO:0005509">
    <property type="term" value="F:calcium ion binding"/>
    <property type="evidence" value="ECO:0007669"/>
    <property type="project" value="InterPro"/>
</dbReference>
<dbReference type="GO" id="GO:0005179">
    <property type="term" value="F:hormone activity"/>
    <property type="evidence" value="ECO:0000250"/>
    <property type="project" value="UniProtKB"/>
</dbReference>
<dbReference type="GO" id="GO:0046848">
    <property type="term" value="F:hydroxyapatite binding"/>
    <property type="evidence" value="ECO:0007669"/>
    <property type="project" value="TreeGrafter"/>
</dbReference>
<dbReference type="GO" id="GO:0008147">
    <property type="term" value="F:structural constituent of bone"/>
    <property type="evidence" value="ECO:0000250"/>
    <property type="project" value="UniProtKB"/>
</dbReference>
<dbReference type="GO" id="GO:0031214">
    <property type="term" value="P:biomineral tissue development"/>
    <property type="evidence" value="ECO:0007669"/>
    <property type="project" value="UniProtKB-KW"/>
</dbReference>
<dbReference type="GO" id="GO:0060348">
    <property type="term" value="P:bone development"/>
    <property type="evidence" value="ECO:0007669"/>
    <property type="project" value="InterPro"/>
</dbReference>
<dbReference type="GO" id="GO:0007420">
    <property type="term" value="P:brain development"/>
    <property type="evidence" value="ECO:0000250"/>
    <property type="project" value="UniProtKB"/>
</dbReference>
<dbReference type="GO" id="GO:0032869">
    <property type="term" value="P:cellular response to insulin stimulus"/>
    <property type="evidence" value="ECO:0000250"/>
    <property type="project" value="UniProtKB"/>
</dbReference>
<dbReference type="GO" id="GO:0050890">
    <property type="term" value="P:cognition"/>
    <property type="evidence" value="ECO:0000250"/>
    <property type="project" value="UniProtKB"/>
</dbReference>
<dbReference type="GO" id="GO:0042593">
    <property type="term" value="P:glucose homeostasis"/>
    <property type="evidence" value="ECO:0000250"/>
    <property type="project" value="UniProtKB"/>
</dbReference>
<dbReference type="GO" id="GO:0007611">
    <property type="term" value="P:learning or memory"/>
    <property type="evidence" value="ECO:0000250"/>
    <property type="project" value="UniProtKB"/>
</dbReference>
<dbReference type="GO" id="GO:1903011">
    <property type="term" value="P:negative regulation of bone development"/>
    <property type="evidence" value="ECO:0000250"/>
    <property type="project" value="UniProtKB"/>
</dbReference>
<dbReference type="GO" id="GO:0001649">
    <property type="term" value="P:osteoblast differentiation"/>
    <property type="evidence" value="ECO:0007669"/>
    <property type="project" value="TreeGrafter"/>
</dbReference>
<dbReference type="GO" id="GO:0001956">
    <property type="term" value="P:positive regulation of neurotransmitter secretion"/>
    <property type="evidence" value="ECO:0000250"/>
    <property type="project" value="UniProtKB"/>
</dbReference>
<dbReference type="GO" id="GO:1900076">
    <property type="term" value="P:regulation of cellular response to insulin stimulus"/>
    <property type="evidence" value="ECO:0007669"/>
    <property type="project" value="InterPro"/>
</dbReference>
<dbReference type="GO" id="GO:2000224">
    <property type="term" value="P:regulation of testosterone biosynthetic process"/>
    <property type="evidence" value="ECO:0000250"/>
    <property type="project" value="UniProtKB"/>
</dbReference>
<dbReference type="GO" id="GO:0032571">
    <property type="term" value="P:response to vitamin K"/>
    <property type="evidence" value="ECO:0007669"/>
    <property type="project" value="InterPro"/>
</dbReference>
<dbReference type="GO" id="GO:0044342">
    <property type="term" value="P:type B pancreatic cell proliferation"/>
    <property type="evidence" value="ECO:0000250"/>
    <property type="project" value="UniProtKB"/>
</dbReference>
<dbReference type="InterPro" id="IPR035972">
    <property type="entry name" value="GLA-like_dom_SF"/>
</dbReference>
<dbReference type="InterPro" id="IPR039176">
    <property type="entry name" value="Osteocalcin"/>
</dbReference>
<dbReference type="PANTHER" id="PTHR14235">
    <property type="entry name" value="OSTEOCALCIN"/>
    <property type="match status" value="1"/>
</dbReference>
<dbReference type="PANTHER" id="PTHR14235:SF0">
    <property type="entry name" value="OSTEOCALCIN"/>
    <property type="match status" value="1"/>
</dbReference>
<dbReference type="SUPFAM" id="SSF57630">
    <property type="entry name" value="GLA-domain"/>
    <property type="match status" value="1"/>
</dbReference>
<organism>
    <name type="scientific">Camelops hesternus</name>
    <name type="common">Western camel</name>
    <name type="synonym">Camelus hesternus</name>
    <dbReference type="NCBI Taxonomy" id="647691"/>
    <lineage>
        <taxon>Eukaryota</taxon>
        <taxon>Metazoa</taxon>
        <taxon>Chordata</taxon>
        <taxon>Craniata</taxon>
        <taxon>Vertebrata</taxon>
        <taxon>Euteleostomi</taxon>
        <taxon>Mammalia</taxon>
        <taxon>Eutheria</taxon>
        <taxon>Laurasiatheria</taxon>
        <taxon>Artiodactyla</taxon>
        <taxon>Tylopoda</taxon>
        <taxon>Camelidae</taxon>
        <taxon>Camelops</taxon>
    </lineage>
</organism>
<gene>
    <name evidence="2" type="primary">BGLAP</name>
</gene>
<evidence type="ECO:0000250" key="1">
    <source>
        <dbReference type="UniProtKB" id="P02818"/>
    </source>
</evidence>
<evidence type="ECO:0000250" key="2">
    <source>
        <dbReference type="UniProtKB" id="P02820"/>
    </source>
</evidence>
<evidence type="ECO:0000250" key="3">
    <source>
        <dbReference type="UniProtKB" id="P83489"/>
    </source>
</evidence>
<evidence type="ECO:0000250" key="4">
    <source>
        <dbReference type="UniProtKB" id="P86546"/>
    </source>
</evidence>
<evidence type="ECO:0000255" key="5"/>
<evidence type="ECO:0000255" key="6">
    <source>
        <dbReference type="PROSITE-ProRule" id="PRU00463"/>
    </source>
</evidence>
<evidence type="ECO:0000269" key="7">
    <source ref="1"/>
</evidence>
<evidence type="ECO:0000303" key="8">
    <source ref="1"/>
</evidence>
<evidence type="ECO:0000305" key="9"/>
<comment type="function">
    <text evidence="4">The carboxylated form is one of the main organic components of the bone matrix, which constitutes 1-2% of the total bone protein: it acts as a negative regulator of bone formation and is required to limit bone formation without impairing bone resorption or mineralization. The carboxylated form binds strongly to apatite and calcium.</text>
</comment>
<comment type="function">
    <text evidence="4">The uncarboxylated form acts as a hormone secreted by osteoblasts, which regulates different cellular processes, such as energy metabolism, male fertility and brain development. Regulates of energy metabolism by acting as a hormone favoring pancreatic beta-cell proliferation, insulin secretion and sensitivity and energy expenditure. Uncarboxylated osteocalcin hormone also promotes testosterone production in the testes: acts as a ligand for G protein-coupled receptor GPRC6A at the surface of Leydig cells, initiating a signaling response that promotes the expression of enzymes required for testosterone synthesis in a CREB-dependent manner. Also acts as a regulator of brain development: osteocalcin hormone crosses the blood-brain barrier and acts as a ligand for GPR158 on neurons, initiating a signaling response that prevents neuronal apoptosis in the hippocampus, favors the synthesis of all monoamine neurotransmitters and inhibits that of gamma-aminobutyric acid (GABA). Osteocalcin also crosses the placenta during pregnancy and maternal osteocalcin is required for fetal brain development.</text>
</comment>
<comment type="subcellular location">
    <subcellularLocation>
        <location evidence="2">Secreted</location>
    </subcellularLocation>
</comment>
<comment type="PTM">
    <text evidence="2">Gamma-carboxyglutamic acid residues are formed by vitamin K dependent carboxylation. These residues are essential for the binding of calcium (By similarity).</text>
</comment>
<comment type="miscellaneous">
    <text evidence="7">Sequence data obtained by MS from fossilized bones of about 21 thousand years old.</text>
</comment>
<comment type="similarity">
    <text evidence="5">Belongs to the osteocalcin/matrix Gla protein family.</text>
</comment>
<reference evidence="9" key="1">
    <citation type="journal article" date="2007" name="Geochim. Cosmochim. Acta">
        <title>Investigation of the protein osteocalcin of Camelops hesternus: Sequence, structure and phylogenetic implications.</title>
        <authorList>
            <person name="Humpula J.F."/>
            <person name="Ostrom P.H."/>
            <person name="Gandhi H."/>
            <person name="Strahler J.R."/>
            <person name="Walker A.K."/>
            <person name="Stafford T.W. Jr."/>
            <person name="Smith J.J."/>
            <person name="Voorhies M.R."/>
            <person name="Corner R.G."/>
            <person name="Andrews P.C."/>
        </authorList>
    </citation>
    <scope>PROTEIN SEQUENCE</scope>
    <scope>HYDROXYLATION AT PRO-9</scope>
    <source>
        <tissue evidence="7">Bone</tissue>
    </source>
</reference>
<protein>
    <recommendedName>
        <fullName evidence="8">Osteocalcin</fullName>
    </recommendedName>
    <alternativeName>
        <fullName evidence="2">Bone Gla protein</fullName>
        <shortName evidence="2">BGP</shortName>
    </alternativeName>
    <alternativeName>
        <fullName evidence="2">Gamma-carboxyglutamic acid-containing protein</fullName>
    </alternativeName>
</protein>
<keyword id="KW-0091">Biomineralization</keyword>
<keyword id="KW-0106">Calcium</keyword>
<keyword id="KW-0903">Direct protein sequencing</keyword>
<keyword id="KW-0952">Extinct organism protein</keyword>
<keyword id="KW-0301">Gamma-carboxyglutamic acid</keyword>
<keyword id="KW-0372">Hormone</keyword>
<keyword id="KW-0379">Hydroxylation</keyword>
<keyword id="KW-0479">Metal-binding</keyword>
<keyword id="KW-0964">Secreted</keyword>
<accession>P86312</accession>
<proteinExistence type="evidence at protein level"/>
<feature type="chain" id="PRO_0000378905" description="Osteocalcin">
    <location>
        <begin position="1"/>
        <end position="42"/>
    </location>
</feature>
<feature type="domain" description="Gla" evidence="6">
    <location>
        <begin position="1"/>
        <end position="40"/>
    </location>
</feature>
<feature type="binding site" evidence="2">
    <location>
        <position position="17"/>
    </location>
    <ligand>
        <name>Ca(2+)</name>
        <dbReference type="ChEBI" id="CHEBI:29108"/>
        <label>1</label>
    </ligand>
</feature>
<feature type="binding site" evidence="2">
    <location>
        <position position="21"/>
    </location>
    <ligand>
        <name>Ca(2+)</name>
        <dbReference type="ChEBI" id="CHEBI:29108"/>
        <label>2</label>
    </ligand>
</feature>
<feature type="binding site" evidence="2">
    <location>
        <position position="23"/>
    </location>
    <ligand>
        <name>Ca(2+)</name>
        <dbReference type="ChEBI" id="CHEBI:29108"/>
        <label>3</label>
    </ligand>
</feature>
<feature type="modified residue" description="4-hydroxyproline" evidence="7">
    <location>
        <position position="9"/>
    </location>
</feature>
<feature type="modified residue" description="4-carboxyglutamate" evidence="1 6">
    <location>
        <position position="17"/>
    </location>
</feature>
<feature type="modified residue" description="4-carboxyglutamate" evidence="3 6">
    <location>
        <position position="21"/>
    </location>
</feature>
<feature type="non-consecutive residues" evidence="8">
    <location>
        <begin position="22"/>
        <end position="23"/>
    </location>
</feature>
<name>OSTCN_CAMHE</name>